<evidence type="ECO:0000255" key="1">
    <source>
        <dbReference type="HAMAP-Rule" id="MF_00158"/>
    </source>
</evidence>
<dbReference type="EC" id="6.3.2.1" evidence="1"/>
<dbReference type="EMBL" id="CP000817">
    <property type="protein sequence ID" value="ACA39575.1"/>
    <property type="molecule type" value="Genomic_DNA"/>
</dbReference>
<dbReference type="RefSeq" id="WP_012293667.1">
    <property type="nucleotide sequence ID" value="NC_010382.1"/>
</dbReference>
<dbReference type="SMR" id="B1HU20"/>
<dbReference type="EnsemblBacteria" id="ACA39575">
    <property type="protein sequence ID" value="ACA39575"/>
    <property type="gene ID" value="Bsph_1988"/>
</dbReference>
<dbReference type="KEGG" id="lsp:Bsph_1988"/>
<dbReference type="HOGENOM" id="CLU_047148_0_0_9"/>
<dbReference type="UniPathway" id="UPA00028">
    <property type="reaction ID" value="UER00005"/>
</dbReference>
<dbReference type="Proteomes" id="UP000002164">
    <property type="component" value="Chromosome"/>
</dbReference>
<dbReference type="GO" id="GO:0005829">
    <property type="term" value="C:cytosol"/>
    <property type="evidence" value="ECO:0007669"/>
    <property type="project" value="TreeGrafter"/>
</dbReference>
<dbReference type="GO" id="GO:0005524">
    <property type="term" value="F:ATP binding"/>
    <property type="evidence" value="ECO:0007669"/>
    <property type="project" value="UniProtKB-KW"/>
</dbReference>
<dbReference type="GO" id="GO:0004592">
    <property type="term" value="F:pantoate-beta-alanine ligase activity"/>
    <property type="evidence" value="ECO:0007669"/>
    <property type="project" value="UniProtKB-UniRule"/>
</dbReference>
<dbReference type="GO" id="GO:0015940">
    <property type="term" value="P:pantothenate biosynthetic process"/>
    <property type="evidence" value="ECO:0007669"/>
    <property type="project" value="UniProtKB-UniRule"/>
</dbReference>
<dbReference type="CDD" id="cd00560">
    <property type="entry name" value="PanC"/>
    <property type="match status" value="1"/>
</dbReference>
<dbReference type="FunFam" id="3.40.50.620:FF:000013">
    <property type="entry name" value="Pantothenate synthetase"/>
    <property type="match status" value="1"/>
</dbReference>
<dbReference type="Gene3D" id="3.40.50.620">
    <property type="entry name" value="HUPs"/>
    <property type="match status" value="1"/>
</dbReference>
<dbReference type="Gene3D" id="3.30.1300.10">
    <property type="entry name" value="Pantoate-beta-alanine ligase, C-terminal domain"/>
    <property type="match status" value="1"/>
</dbReference>
<dbReference type="HAMAP" id="MF_00158">
    <property type="entry name" value="PanC"/>
    <property type="match status" value="1"/>
</dbReference>
<dbReference type="InterPro" id="IPR004821">
    <property type="entry name" value="Cyt_trans-like"/>
</dbReference>
<dbReference type="InterPro" id="IPR003721">
    <property type="entry name" value="Pantoate_ligase"/>
</dbReference>
<dbReference type="InterPro" id="IPR042176">
    <property type="entry name" value="Pantoate_ligase_C"/>
</dbReference>
<dbReference type="InterPro" id="IPR014729">
    <property type="entry name" value="Rossmann-like_a/b/a_fold"/>
</dbReference>
<dbReference type="NCBIfam" id="TIGR00125">
    <property type="entry name" value="cyt_tran_rel"/>
    <property type="match status" value="1"/>
</dbReference>
<dbReference type="NCBIfam" id="TIGR00018">
    <property type="entry name" value="panC"/>
    <property type="match status" value="1"/>
</dbReference>
<dbReference type="PANTHER" id="PTHR21299">
    <property type="entry name" value="CYTIDYLATE KINASE/PANTOATE-BETA-ALANINE LIGASE"/>
    <property type="match status" value="1"/>
</dbReference>
<dbReference type="PANTHER" id="PTHR21299:SF1">
    <property type="entry name" value="PANTOATE--BETA-ALANINE LIGASE"/>
    <property type="match status" value="1"/>
</dbReference>
<dbReference type="Pfam" id="PF02569">
    <property type="entry name" value="Pantoate_ligase"/>
    <property type="match status" value="1"/>
</dbReference>
<dbReference type="SUPFAM" id="SSF52374">
    <property type="entry name" value="Nucleotidylyl transferase"/>
    <property type="match status" value="1"/>
</dbReference>
<protein>
    <recommendedName>
        <fullName evidence="1">Pantothenate synthetase</fullName>
        <shortName evidence="1">PS</shortName>
        <ecNumber evidence="1">6.3.2.1</ecNumber>
    </recommendedName>
    <alternativeName>
        <fullName evidence="1">Pantoate--beta-alanine ligase</fullName>
    </alternativeName>
    <alternativeName>
        <fullName evidence="1">Pantoate-activating enzyme</fullName>
    </alternativeName>
</protein>
<keyword id="KW-0067">ATP-binding</keyword>
<keyword id="KW-0963">Cytoplasm</keyword>
<keyword id="KW-0436">Ligase</keyword>
<keyword id="KW-0547">Nucleotide-binding</keyword>
<keyword id="KW-0566">Pantothenate biosynthesis</keyword>
<organism>
    <name type="scientific">Lysinibacillus sphaericus (strain C3-41)</name>
    <dbReference type="NCBI Taxonomy" id="444177"/>
    <lineage>
        <taxon>Bacteria</taxon>
        <taxon>Bacillati</taxon>
        <taxon>Bacillota</taxon>
        <taxon>Bacilli</taxon>
        <taxon>Bacillales</taxon>
        <taxon>Bacillaceae</taxon>
        <taxon>Lysinibacillus</taxon>
    </lineage>
</organism>
<comment type="function">
    <text evidence="1">Catalyzes the condensation of pantoate with beta-alanine in an ATP-dependent reaction via a pantoyl-adenylate intermediate.</text>
</comment>
<comment type="catalytic activity">
    <reaction evidence="1">
        <text>(R)-pantoate + beta-alanine + ATP = (R)-pantothenate + AMP + diphosphate + H(+)</text>
        <dbReference type="Rhea" id="RHEA:10912"/>
        <dbReference type="ChEBI" id="CHEBI:15378"/>
        <dbReference type="ChEBI" id="CHEBI:15980"/>
        <dbReference type="ChEBI" id="CHEBI:29032"/>
        <dbReference type="ChEBI" id="CHEBI:30616"/>
        <dbReference type="ChEBI" id="CHEBI:33019"/>
        <dbReference type="ChEBI" id="CHEBI:57966"/>
        <dbReference type="ChEBI" id="CHEBI:456215"/>
        <dbReference type="EC" id="6.3.2.1"/>
    </reaction>
</comment>
<comment type="pathway">
    <text evidence="1">Cofactor biosynthesis; (R)-pantothenate biosynthesis; (R)-pantothenate from (R)-pantoate and beta-alanine: step 1/1.</text>
</comment>
<comment type="subunit">
    <text evidence="1">Homodimer.</text>
</comment>
<comment type="subcellular location">
    <subcellularLocation>
        <location evidence="1">Cytoplasm</location>
    </subcellularLocation>
</comment>
<comment type="miscellaneous">
    <text evidence="1">The reaction proceeds by a bi uni uni bi ping pong mechanism.</text>
</comment>
<comment type="similarity">
    <text evidence="1">Belongs to the pantothenate synthetase family.</text>
</comment>
<feature type="chain" id="PRO_1000097082" description="Pantothenate synthetase">
    <location>
        <begin position="1"/>
        <end position="284"/>
    </location>
</feature>
<feature type="active site" description="Proton donor" evidence="1">
    <location>
        <position position="37"/>
    </location>
</feature>
<feature type="binding site" evidence="1">
    <location>
        <begin position="30"/>
        <end position="37"/>
    </location>
    <ligand>
        <name>ATP</name>
        <dbReference type="ChEBI" id="CHEBI:30616"/>
    </ligand>
</feature>
<feature type="binding site" evidence="1">
    <location>
        <position position="61"/>
    </location>
    <ligand>
        <name>(R)-pantoate</name>
        <dbReference type="ChEBI" id="CHEBI:15980"/>
    </ligand>
</feature>
<feature type="binding site" evidence="1">
    <location>
        <position position="61"/>
    </location>
    <ligand>
        <name>beta-alanine</name>
        <dbReference type="ChEBI" id="CHEBI:57966"/>
    </ligand>
</feature>
<feature type="binding site" evidence="1">
    <location>
        <begin position="147"/>
        <end position="150"/>
    </location>
    <ligand>
        <name>ATP</name>
        <dbReference type="ChEBI" id="CHEBI:30616"/>
    </ligand>
</feature>
<feature type="binding site" evidence="1">
    <location>
        <position position="153"/>
    </location>
    <ligand>
        <name>(R)-pantoate</name>
        <dbReference type="ChEBI" id="CHEBI:15980"/>
    </ligand>
</feature>
<feature type="binding site" evidence="1">
    <location>
        <position position="176"/>
    </location>
    <ligand>
        <name>ATP</name>
        <dbReference type="ChEBI" id="CHEBI:30616"/>
    </ligand>
</feature>
<feature type="binding site" evidence="1">
    <location>
        <begin position="184"/>
        <end position="187"/>
    </location>
    <ligand>
        <name>ATP</name>
        <dbReference type="ChEBI" id="CHEBI:30616"/>
    </ligand>
</feature>
<proteinExistence type="inferred from homology"/>
<reference key="1">
    <citation type="journal article" date="2008" name="J. Bacteriol.">
        <title>Complete genome sequence of the mosquitocidal bacterium Bacillus sphaericus C3-41 and comparison with those of closely related Bacillus species.</title>
        <authorList>
            <person name="Hu X."/>
            <person name="Fan W."/>
            <person name="Han B."/>
            <person name="Liu H."/>
            <person name="Zheng D."/>
            <person name="Li Q."/>
            <person name="Dong W."/>
            <person name="Yan J."/>
            <person name="Gao M."/>
            <person name="Berry C."/>
            <person name="Yuan Z."/>
        </authorList>
    </citation>
    <scope>NUCLEOTIDE SEQUENCE [LARGE SCALE GENOMIC DNA]</scope>
    <source>
        <strain>C3-41</strain>
    </source>
</reference>
<sequence length="284" mass="31279">MKVMTTIQALTAEIQAAKQAHKTIGLVPTMGYLHEGHLTLAQTARAENDLVVMSIFVNPTQFGPNEDFESYPRDLPRDIALAESVGVDLVFAPSVEEMYPQDGGIRIHAGEQATILCGASRPGHFDGVLQVVAKLFHLTLPTRAYFGQKDAQQVAIITTMVRDFNFPLDMRVVPIVREEDGLAKSSRNIYLSESEREEAPAIHEALQLARDSFLATGDVREALAKAKAHIQIQTHGRIDYIELLAYPDLTPVTETTQQVLLAAAVYIGKTRLIDNSIFTVKEGL</sequence>
<gene>
    <name evidence="1" type="primary">panC</name>
    <name type="ordered locus">Bsph_1988</name>
</gene>
<accession>B1HU20</accession>
<name>PANC_LYSSC</name>